<keyword id="KW-1003">Cell membrane</keyword>
<keyword id="KW-0285">Flavoprotein</keyword>
<keyword id="KW-0288">FMN</keyword>
<keyword id="KW-0472">Membrane</keyword>
<keyword id="KW-0560">Oxidoreductase</keyword>
<keyword id="KW-0665">Pyrimidine biosynthesis</keyword>
<keyword id="KW-1185">Reference proteome</keyword>
<dbReference type="EC" id="1.3.5.2" evidence="1"/>
<dbReference type="EMBL" id="CR936257">
    <property type="protein sequence ID" value="CAI48305.1"/>
    <property type="molecule type" value="Genomic_DNA"/>
</dbReference>
<dbReference type="RefSeq" id="WP_011321941.1">
    <property type="nucleotide sequence ID" value="NC_007426.1"/>
</dbReference>
<dbReference type="SMR" id="Q3IU78"/>
<dbReference type="STRING" id="348780.NP_0428A"/>
<dbReference type="EnsemblBacteria" id="CAI48305">
    <property type="protein sequence ID" value="CAI48305"/>
    <property type="gene ID" value="NP_0428A"/>
</dbReference>
<dbReference type="GeneID" id="3703083"/>
<dbReference type="KEGG" id="nph:NP_0428A"/>
<dbReference type="eggNOG" id="arCOG00603">
    <property type="taxonomic scope" value="Archaea"/>
</dbReference>
<dbReference type="HOGENOM" id="CLU_013640_2_0_2"/>
<dbReference type="OrthoDB" id="36608at2157"/>
<dbReference type="UniPathway" id="UPA00070">
    <property type="reaction ID" value="UER00946"/>
</dbReference>
<dbReference type="Proteomes" id="UP000002698">
    <property type="component" value="Chromosome"/>
</dbReference>
<dbReference type="GO" id="GO:0005737">
    <property type="term" value="C:cytoplasm"/>
    <property type="evidence" value="ECO:0007669"/>
    <property type="project" value="InterPro"/>
</dbReference>
<dbReference type="GO" id="GO:0005886">
    <property type="term" value="C:plasma membrane"/>
    <property type="evidence" value="ECO:0007669"/>
    <property type="project" value="UniProtKB-SubCell"/>
</dbReference>
<dbReference type="GO" id="GO:0106430">
    <property type="term" value="F:dihydroorotate dehydrogenase (quinone) activity"/>
    <property type="evidence" value="ECO:0007669"/>
    <property type="project" value="UniProtKB-EC"/>
</dbReference>
<dbReference type="GO" id="GO:0006207">
    <property type="term" value="P:'de novo' pyrimidine nucleobase biosynthetic process"/>
    <property type="evidence" value="ECO:0007669"/>
    <property type="project" value="InterPro"/>
</dbReference>
<dbReference type="GO" id="GO:0044205">
    <property type="term" value="P:'de novo' UMP biosynthetic process"/>
    <property type="evidence" value="ECO:0007669"/>
    <property type="project" value="UniProtKB-UniRule"/>
</dbReference>
<dbReference type="CDD" id="cd04738">
    <property type="entry name" value="DHOD_2_like"/>
    <property type="match status" value="1"/>
</dbReference>
<dbReference type="Gene3D" id="3.20.20.70">
    <property type="entry name" value="Aldolase class I"/>
    <property type="match status" value="1"/>
</dbReference>
<dbReference type="HAMAP" id="MF_00225">
    <property type="entry name" value="DHO_dh_type2"/>
    <property type="match status" value="1"/>
</dbReference>
<dbReference type="InterPro" id="IPR013785">
    <property type="entry name" value="Aldolase_TIM"/>
</dbReference>
<dbReference type="InterPro" id="IPR050074">
    <property type="entry name" value="DHO_dehydrogenase"/>
</dbReference>
<dbReference type="InterPro" id="IPR012135">
    <property type="entry name" value="Dihydroorotate_DH_1_2"/>
</dbReference>
<dbReference type="InterPro" id="IPR005719">
    <property type="entry name" value="Dihydroorotate_DH_2"/>
</dbReference>
<dbReference type="InterPro" id="IPR005720">
    <property type="entry name" value="Dihydroorotate_DH_cat"/>
</dbReference>
<dbReference type="InterPro" id="IPR001295">
    <property type="entry name" value="Dihydroorotate_DH_CS"/>
</dbReference>
<dbReference type="NCBIfam" id="NF003645">
    <property type="entry name" value="PRK05286.1-2"/>
    <property type="match status" value="1"/>
</dbReference>
<dbReference type="NCBIfam" id="NF003652">
    <property type="entry name" value="PRK05286.2-5"/>
    <property type="match status" value="1"/>
</dbReference>
<dbReference type="NCBIfam" id="TIGR01036">
    <property type="entry name" value="pyrD_sub2"/>
    <property type="match status" value="1"/>
</dbReference>
<dbReference type="PANTHER" id="PTHR48109:SF4">
    <property type="entry name" value="DIHYDROOROTATE DEHYDROGENASE (QUINONE), MITOCHONDRIAL"/>
    <property type="match status" value="1"/>
</dbReference>
<dbReference type="PANTHER" id="PTHR48109">
    <property type="entry name" value="DIHYDROOROTATE DEHYDROGENASE (QUINONE), MITOCHONDRIAL-RELATED"/>
    <property type="match status" value="1"/>
</dbReference>
<dbReference type="Pfam" id="PF01180">
    <property type="entry name" value="DHO_dh"/>
    <property type="match status" value="1"/>
</dbReference>
<dbReference type="PIRSF" id="PIRSF000164">
    <property type="entry name" value="DHO_oxidase"/>
    <property type="match status" value="1"/>
</dbReference>
<dbReference type="SUPFAM" id="SSF51395">
    <property type="entry name" value="FMN-linked oxidoreductases"/>
    <property type="match status" value="1"/>
</dbReference>
<dbReference type="PROSITE" id="PS00911">
    <property type="entry name" value="DHODEHASE_1"/>
    <property type="match status" value="1"/>
</dbReference>
<dbReference type="PROSITE" id="PS00912">
    <property type="entry name" value="DHODEHASE_2"/>
    <property type="match status" value="1"/>
</dbReference>
<proteinExistence type="inferred from homology"/>
<feature type="chain" id="PRO_1000024190" description="Dihydroorotate dehydrogenase (quinone)">
    <location>
        <begin position="1"/>
        <end position="350"/>
    </location>
</feature>
<feature type="region of interest" description="Disordered" evidence="2">
    <location>
        <begin position="249"/>
        <end position="268"/>
    </location>
</feature>
<feature type="active site" description="Nucleophile" evidence="1">
    <location>
        <position position="180"/>
    </location>
</feature>
<feature type="binding site" evidence="1">
    <location>
        <begin position="67"/>
        <end position="71"/>
    </location>
    <ligand>
        <name>FMN</name>
        <dbReference type="ChEBI" id="CHEBI:58210"/>
    </ligand>
</feature>
<feature type="binding site" evidence="1">
    <location>
        <position position="71"/>
    </location>
    <ligand>
        <name>substrate</name>
    </ligand>
</feature>
<feature type="binding site" evidence="1">
    <location>
        <position position="91"/>
    </location>
    <ligand>
        <name>FMN</name>
        <dbReference type="ChEBI" id="CHEBI:58210"/>
    </ligand>
</feature>
<feature type="binding site" evidence="1">
    <location>
        <begin position="116"/>
        <end position="120"/>
    </location>
    <ligand>
        <name>substrate</name>
    </ligand>
</feature>
<feature type="binding site" evidence="1">
    <location>
        <position position="144"/>
    </location>
    <ligand>
        <name>FMN</name>
        <dbReference type="ChEBI" id="CHEBI:58210"/>
    </ligand>
</feature>
<feature type="binding site" evidence="1">
    <location>
        <position position="177"/>
    </location>
    <ligand>
        <name>FMN</name>
        <dbReference type="ChEBI" id="CHEBI:58210"/>
    </ligand>
</feature>
<feature type="binding site" evidence="1">
    <location>
        <position position="177"/>
    </location>
    <ligand>
        <name>substrate</name>
    </ligand>
</feature>
<feature type="binding site" evidence="1">
    <location>
        <position position="182"/>
    </location>
    <ligand>
        <name>substrate</name>
    </ligand>
</feature>
<feature type="binding site" evidence="1">
    <location>
        <position position="213"/>
    </location>
    <ligand>
        <name>FMN</name>
        <dbReference type="ChEBI" id="CHEBI:58210"/>
    </ligand>
</feature>
<feature type="binding site" evidence="1">
    <location>
        <position position="241"/>
    </location>
    <ligand>
        <name>FMN</name>
        <dbReference type="ChEBI" id="CHEBI:58210"/>
    </ligand>
</feature>
<feature type="binding site" evidence="1">
    <location>
        <begin position="242"/>
        <end position="243"/>
    </location>
    <ligand>
        <name>substrate</name>
    </ligand>
</feature>
<feature type="binding site" evidence="1">
    <location>
        <position position="264"/>
    </location>
    <ligand>
        <name>FMN</name>
        <dbReference type="ChEBI" id="CHEBI:58210"/>
    </ligand>
</feature>
<feature type="binding site" evidence="1">
    <location>
        <position position="291"/>
    </location>
    <ligand>
        <name>FMN</name>
        <dbReference type="ChEBI" id="CHEBI:58210"/>
    </ligand>
</feature>
<feature type="binding site" evidence="1">
    <location>
        <begin position="312"/>
        <end position="313"/>
    </location>
    <ligand>
        <name>FMN</name>
        <dbReference type="ChEBI" id="CHEBI:58210"/>
    </ligand>
</feature>
<gene>
    <name evidence="1" type="primary">pyrD</name>
    <name type="ordered locus">NP_0428A</name>
</gene>
<accession>Q3IU78</accession>
<organism>
    <name type="scientific">Natronomonas pharaonis (strain ATCC 35678 / DSM 2160 / CIP 103997 / JCM 8858 / NBRC 14720 / NCIMB 2260 / Gabara)</name>
    <name type="common">Halobacterium pharaonis</name>
    <dbReference type="NCBI Taxonomy" id="348780"/>
    <lineage>
        <taxon>Archaea</taxon>
        <taxon>Methanobacteriati</taxon>
        <taxon>Methanobacteriota</taxon>
        <taxon>Stenosarchaea group</taxon>
        <taxon>Halobacteria</taxon>
        <taxon>Halobacteriales</taxon>
        <taxon>Haloarculaceae</taxon>
        <taxon>Natronomonas</taxon>
    </lineage>
</organism>
<sequence>MGLYQLLKPALFQLDAETAHGLGHRVLDGIQGTPLERIVADYCTVVDPRLRVDAFGQTFPNPVGVAAGFDKNAEIPDALGALGFGHVEVGGVTAEPQAGNPRPRMFRLAEDRALINRMGFNNDGADIVGERLAATDCRVPVGVNIGKSKSAANDDAEADYQYTYERVADGGDYFVVNVSSPNTPGLRELQSRDRLESILGTLQDDGASPLLVKLSPDLTDAAIEDAIEVVEDLGLDGIIATNTTTKRPASLHSDAADEEGGLSGAPITDESTDIVRFIAKRTDKPIVGVGGIDDAESAYEKIRNGASVVQLYTGLVYEGPTIARDINRGLLKLLERDGFASVEDAVGVDI</sequence>
<evidence type="ECO:0000255" key="1">
    <source>
        <dbReference type="HAMAP-Rule" id="MF_00225"/>
    </source>
</evidence>
<evidence type="ECO:0000256" key="2">
    <source>
        <dbReference type="SAM" id="MobiDB-lite"/>
    </source>
</evidence>
<comment type="function">
    <text evidence="1">Catalyzes the conversion of dihydroorotate to orotate with quinone as electron acceptor.</text>
</comment>
<comment type="catalytic activity">
    <reaction evidence="1">
        <text>(S)-dihydroorotate + a quinone = orotate + a quinol</text>
        <dbReference type="Rhea" id="RHEA:30187"/>
        <dbReference type="ChEBI" id="CHEBI:24646"/>
        <dbReference type="ChEBI" id="CHEBI:30839"/>
        <dbReference type="ChEBI" id="CHEBI:30864"/>
        <dbReference type="ChEBI" id="CHEBI:132124"/>
        <dbReference type="EC" id="1.3.5.2"/>
    </reaction>
</comment>
<comment type="cofactor">
    <cofactor evidence="1">
        <name>FMN</name>
        <dbReference type="ChEBI" id="CHEBI:58210"/>
    </cofactor>
    <text evidence="1">Binds 1 FMN per subunit.</text>
</comment>
<comment type="pathway">
    <text evidence="1">Pyrimidine metabolism; UMP biosynthesis via de novo pathway; orotate from (S)-dihydroorotate (quinone route): step 1/1.</text>
</comment>
<comment type="subunit">
    <text evidence="1">Monomer.</text>
</comment>
<comment type="subcellular location">
    <subcellularLocation>
        <location evidence="1">Cell membrane</location>
        <topology evidence="1">Peripheral membrane protein</topology>
    </subcellularLocation>
</comment>
<comment type="similarity">
    <text evidence="1">Belongs to the dihydroorotate dehydrogenase family. Type 2 subfamily.</text>
</comment>
<name>PYRD_NATPD</name>
<reference key="1">
    <citation type="journal article" date="2005" name="Genome Res.">
        <title>Living with two extremes: conclusions from the genome sequence of Natronomonas pharaonis.</title>
        <authorList>
            <person name="Falb M."/>
            <person name="Pfeiffer F."/>
            <person name="Palm P."/>
            <person name="Rodewald K."/>
            <person name="Hickmann V."/>
            <person name="Tittor J."/>
            <person name="Oesterhelt D."/>
        </authorList>
    </citation>
    <scope>NUCLEOTIDE SEQUENCE [LARGE SCALE GENOMIC DNA]</scope>
    <source>
        <strain>ATCC 35678 / DSM 2160 / CIP 103997 / JCM 8858 / NBRC 14720 / NCIMB 2260 / Gabara</strain>
    </source>
</reference>
<protein>
    <recommendedName>
        <fullName evidence="1">Dihydroorotate dehydrogenase (quinone)</fullName>
        <ecNumber evidence="1">1.3.5.2</ecNumber>
    </recommendedName>
    <alternativeName>
        <fullName evidence="1">DHOdehase</fullName>
        <shortName evidence="1">DHOD</shortName>
        <shortName evidence="1">DHODase</shortName>
    </alternativeName>
    <alternativeName>
        <fullName evidence="1">Dihydroorotate oxidase</fullName>
    </alternativeName>
</protein>